<feature type="chain" id="PRO_0000448892" description="26S rRNA (cytosine-C(5))-methyltransferase NOP2B">
    <location>
        <begin position="1"/>
        <end position="671"/>
    </location>
</feature>
<feature type="region of interest" description="Disordered" evidence="6">
    <location>
        <begin position="1"/>
        <end position="188"/>
    </location>
</feature>
<feature type="region of interest" description="Disordered" evidence="6">
    <location>
        <begin position="550"/>
        <end position="671"/>
    </location>
</feature>
<feature type="short sequence motif" description="Nuclear localization signal 1" evidence="4">
    <location>
        <begin position="28"/>
        <end position="35"/>
    </location>
</feature>
<feature type="short sequence motif" description="Nuclear localization signal 2" evidence="4">
    <location>
        <begin position="264"/>
        <end position="271"/>
    </location>
</feature>
<feature type="short sequence motif" description="Nuclear localization signal 3" evidence="4">
    <location>
        <begin position="594"/>
        <end position="601"/>
    </location>
</feature>
<feature type="short sequence motif" description="Nuclear localization signal 4" evidence="4">
    <location>
        <begin position="639"/>
        <end position="646"/>
    </location>
</feature>
<feature type="compositionally biased region" description="Basic residues" evidence="6">
    <location>
        <begin position="1"/>
        <end position="11"/>
    </location>
</feature>
<feature type="compositionally biased region" description="Polar residues" evidence="6">
    <location>
        <begin position="12"/>
        <end position="25"/>
    </location>
</feature>
<feature type="compositionally biased region" description="Basic residues" evidence="6">
    <location>
        <begin position="30"/>
        <end position="44"/>
    </location>
</feature>
<feature type="compositionally biased region" description="Basic and acidic residues" evidence="6">
    <location>
        <begin position="45"/>
        <end position="57"/>
    </location>
</feature>
<feature type="compositionally biased region" description="Acidic residues" evidence="6">
    <location>
        <begin position="58"/>
        <end position="75"/>
    </location>
</feature>
<feature type="compositionally biased region" description="Acidic residues" evidence="6">
    <location>
        <begin position="83"/>
        <end position="125"/>
    </location>
</feature>
<feature type="compositionally biased region" description="Low complexity" evidence="6">
    <location>
        <begin position="129"/>
        <end position="139"/>
    </location>
</feature>
<feature type="compositionally biased region" description="Basic and acidic residues" evidence="6">
    <location>
        <begin position="162"/>
        <end position="173"/>
    </location>
</feature>
<feature type="compositionally biased region" description="Basic and acidic residues" evidence="6">
    <location>
        <begin position="594"/>
        <end position="615"/>
    </location>
</feature>
<feature type="compositionally biased region" description="Basic and acidic residues" evidence="6">
    <location>
        <begin position="650"/>
        <end position="671"/>
    </location>
</feature>
<feature type="active site" description="Nucleophile" evidence="5">
    <location>
        <position position="477"/>
    </location>
</feature>
<feature type="binding site" evidence="5">
    <location>
        <begin position="350"/>
        <end position="356"/>
    </location>
    <ligand>
        <name>S-adenosyl-L-methionine</name>
        <dbReference type="ChEBI" id="CHEBI:59789"/>
    </ligand>
</feature>
<feature type="binding site" evidence="5">
    <location>
        <position position="374"/>
    </location>
    <ligand>
        <name>S-adenosyl-L-methionine</name>
        <dbReference type="ChEBI" id="CHEBI:59789"/>
    </ligand>
</feature>
<feature type="binding site" evidence="5">
    <location>
        <position position="401"/>
    </location>
    <ligand>
        <name>S-adenosyl-L-methionine</name>
        <dbReference type="ChEBI" id="CHEBI:59789"/>
    </ligand>
</feature>
<feature type="binding site" evidence="5">
    <location>
        <position position="420"/>
    </location>
    <ligand>
        <name>S-adenosyl-L-methionine</name>
        <dbReference type="ChEBI" id="CHEBI:59789"/>
    </ligand>
</feature>
<accession>Q8VYM6</accession>
<accession>Q9LDL2</accession>
<dbReference type="EC" id="2.1.1.-" evidence="5 7"/>
<dbReference type="EMBL" id="AL078465">
    <property type="protein sequence ID" value="CAB77061.1"/>
    <property type="status" value="ALT_SEQ"/>
    <property type="molecule type" value="Genomic_DNA"/>
</dbReference>
<dbReference type="EMBL" id="AL161565">
    <property type="protein sequence ID" value="CAB79515.1"/>
    <property type="status" value="ALT_SEQ"/>
    <property type="molecule type" value="Genomic_DNA"/>
</dbReference>
<dbReference type="EMBL" id="CP002687">
    <property type="protein sequence ID" value="AEE85225.1"/>
    <property type="molecule type" value="Genomic_DNA"/>
</dbReference>
<dbReference type="EMBL" id="AY070425">
    <property type="protein sequence ID" value="AAL49920.1"/>
    <property type="molecule type" value="mRNA"/>
</dbReference>
<dbReference type="EMBL" id="AY133836">
    <property type="protein sequence ID" value="AAM91770.1"/>
    <property type="molecule type" value="mRNA"/>
</dbReference>
<dbReference type="PIR" id="T08926">
    <property type="entry name" value="T08926"/>
</dbReference>
<dbReference type="RefSeq" id="NP_194390.2">
    <property type="nucleotide sequence ID" value="NM_118794.5"/>
</dbReference>
<dbReference type="SMR" id="Q8VYM6"/>
<dbReference type="FunCoup" id="Q8VYM6">
    <property type="interactions" value="3297"/>
</dbReference>
<dbReference type="IntAct" id="Q8VYM6">
    <property type="interactions" value="1"/>
</dbReference>
<dbReference type="STRING" id="3702.Q8VYM6"/>
<dbReference type="GlyGen" id="Q8VYM6">
    <property type="glycosylation" value="1 site"/>
</dbReference>
<dbReference type="PaxDb" id="3702-AT4G26600.1"/>
<dbReference type="ProteomicsDB" id="185285"/>
<dbReference type="EnsemblPlants" id="AT4G26600.1">
    <property type="protein sequence ID" value="AT4G26600.1"/>
    <property type="gene ID" value="AT4G26600"/>
</dbReference>
<dbReference type="GeneID" id="828767"/>
<dbReference type="Gramene" id="AT4G26600.1">
    <property type="protein sequence ID" value="AT4G26600.1"/>
    <property type="gene ID" value="AT4G26600"/>
</dbReference>
<dbReference type="KEGG" id="ath:AT4G26600"/>
<dbReference type="Araport" id="AT4G26600"/>
<dbReference type="TAIR" id="AT4G26600">
    <property type="gene designation" value="NOP2B"/>
</dbReference>
<dbReference type="eggNOG" id="KOG1122">
    <property type="taxonomic scope" value="Eukaryota"/>
</dbReference>
<dbReference type="HOGENOM" id="CLU_005316_3_1_1"/>
<dbReference type="InParanoid" id="Q8VYM6"/>
<dbReference type="PhylomeDB" id="Q8VYM6"/>
<dbReference type="PRO" id="PR:Q8VYM6"/>
<dbReference type="Proteomes" id="UP000006548">
    <property type="component" value="Chromosome 4"/>
</dbReference>
<dbReference type="ExpressionAtlas" id="Q8VYM6">
    <property type="expression patterns" value="baseline and differential"/>
</dbReference>
<dbReference type="GO" id="GO:0005730">
    <property type="term" value="C:nucleolus"/>
    <property type="evidence" value="ECO:0007005"/>
    <property type="project" value="TAIR"/>
</dbReference>
<dbReference type="GO" id="GO:0003723">
    <property type="term" value="F:RNA binding"/>
    <property type="evidence" value="ECO:0007669"/>
    <property type="project" value="UniProtKB-KW"/>
</dbReference>
<dbReference type="GO" id="GO:0008173">
    <property type="term" value="F:RNA methyltransferase activity"/>
    <property type="evidence" value="ECO:0007669"/>
    <property type="project" value="InterPro"/>
</dbReference>
<dbReference type="GO" id="GO:0008757">
    <property type="term" value="F:S-adenosylmethionine-dependent methyltransferase activity"/>
    <property type="evidence" value="ECO:0007669"/>
    <property type="project" value="InterPro"/>
</dbReference>
<dbReference type="GO" id="GO:0001510">
    <property type="term" value="P:RNA methylation"/>
    <property type="evidence" value="ECO:0007669"/>
    <property type="project" value="InterPro"/>
</dbReference>
<dbReference type="GO" id="GO:0006364">
    <property type="term" value="P:rRNA processing"/>
    <property type="evidence" value="ECO:0007669"/>
    <property type="project" value="UniProtKB-KW"/>
</dbReference>
<dbReference type="FunFam" id="3.30.70.1170:FF:000001">
    <property type="entry name" value="Ribosomal RNA methyltransferase Nop2"/>
    <property type="match status" value="1"/>
</dbReference>
<dbReference type="FunFam" id="3.40.50.150:FF:000923">
    <property type="entry name" value="S-adenosyl-L-methionine-dependent methyltransferases superfamily protein"/>
    <property type="match status" value="1"/>
</dbReference>
<dbReference type="Gene3D" id="3.30.70.1170">
    <property type="entry name" value="Sun protein, domain 3"/>
    <property type="match status" value="1"/>
</dbReference>
<dbReference type="Gene3D" id="3.40.50.150">
    <property type="entry name" value="Vaccinia Virus protein VP39"/>
    <property type="match status" value="1"/>
</dbReference>
<dbReference type="InterPro" id="IPR049560">
    <property type="entry name" value="MeTrfase_RsmB-F_NOP2_cat"/>
</dbReference>
<dbReference type="InterPro" id="IPR001678">
    <property type="entry name" value="MeTrfase_RsmB-F_NOP2_dom"/>
</dbReference>
<dbReference type="InterPro" id="IPR011023">
    <property type="entry name" value="Nop2p"/>
</dbReference>
<dbReference type="InterPro" id="IPR023267">
    <property type="entry name" value="RCMT"/>
</dbReference>
<dbReference type="InterPro" id="IPR023273">
    <property type="entry name" value="RCMT_NOP2"/>
</dbReference>
<dbReference type="InterPro" id="IPR018314">
    <property type="entry name" value="RsmB/NOL1/NOP2-like_CS"/>
</dbReference>
<dbReference type="InterPro" id="IPR029063">
    <property type="entry name" value="SAM-dependent_MTases_sf"/>
</dbReference>
<dbReference type="NCBIfam" id="TIGR00446">
    <property type="entry name" value="nop2p"/>
    <property type="match status" value="1"/>
</dbReference>
<dbReference type="PANTHER" id="PTHR22807:SF30">
    <property type="entry name" value="28S RRNA (CYTOSINE(4447)-C(5))-METHYLTRANSFERASE-RELATED"/>
    <property type="match status" value="1"/>
</dbReference>
<dbReference type="PANTHER" id="PTHR22807">
    <property type="entry name" value="NOP2 YEAST -RELATED NOL1/NOP2/FMU SUN DOMAIN-CONTAINING"/>
    <property type="match status" value="1"/>
</dbReference>
<dbReference type="Pfam" id="PF01189">
    <property type="entry name" value="Methyltr_RsmB-F"/>
    <property type="match status" value="1"/>
</dbReference>
<dbReference type="PRINTS" id="PR02008">
    <property type="entry name" value="RCMTFAMILY"/>
</dbReference>
<dbReference type="PRINTS" id="PR02012">
    <property type="entry name" value="RCMTNOP2"/>
</dbReference>
<dbReference type="SUPFAM" id="SSF53335">
    <property type="entry name" value="S-adenosyl-L-methionine-dependent methyltransferases"/>
    <property type="match status" value="1"/>
</dbReference>
<dbReference type="PROSITE" id="PS01153">
    <property type="entry name" value="NOL1_NOP2_SUN"/>
    <property type="match status" value="1"/>
</dbReference>
<dbReference type="PROSITE" id="PS51686">
    <property type="entry name" value="SAM_MT_RSMB_NOP"/>
    <property type="match status" value="1"/>
</dbReference>
<comment type="function">
    <text evidence="2 3 7">Involved in ribosomal large subunit assembly (By similarity). S-adenosyl-L-methionine-dependent methyltransferase that probably methylates the C(5) position of cytosine 1586 (m5C1586) in mitochondrial 26S rRNA (PubMed:26268215). May play a role in the regulation of the cell cycle and the increased nucleolar activity that is associated with the cell proliferation (By similarity). Seems involved in the regulation of cell proliferation (By similarity).</text>
</comment>
<comment type="catalytic activity">
    <reaction evidence="7">
        <text>a cytidine in rRNA + S-adenosyl-L-methionine = a 5-methylcytidine in rRNA + S-adenosyl-L-homocysteine + H(+)</text>
        <dbReference type="Rhea" id="RHEA:61484"/>
        <dbReference type="Rhea" id="RHEA-COMP:15836"/>
        <dbReference type="Rhea" id="RHEA-COMP:15837"/>
        <dbReference type="ChEBI" id="CHEBI:15378"/>
        <dbReference type="ChEBI" id="CHEBI:57856"/>
        <dbReference type="ChEBI" id="CHEBI:59789"/>
        <dbReference type="ChEBI" id="CHEBI:74483"/>
        <dbReference type="ChEBI" id="CHEBI:82748"/>
    </reaction>
</comment>
<comment type="subcellular location">
    <subcellularLocation>
        <location evidence="4">Nucleus</location>
    </subcellularLocation>
    <subcellularLocation>
        <location evidence="1">Nucleus</location>
        <location evidence="1">Nucleolus</location>
    </subcellularLocation>
</comment>
<comment type="disruption phenotype">
    <text evidence="7">Normal levels of methylation at cytosine 2860 of 25S rRNA, but slight reduction of mitochondrial 26S rRNA cytosine 1586 (m5C1586).</text>
</comment>
<comment type="similarity">
    <text evidence="10">Belongs to the class I-like SAM-binding methyltransferase superfamily. RsmB/NOP family.</text>
</comment>
<comment type="sequence caution" evidence="10">
    <conflict type="erroneous gene model prediction">
        <sequence resource="EMBL-CDS" id="CAB77061"/>
    </conflict>
</comment>
<comment type="sequence caution" evidence="10">
    <conflict type="erroneous gene model prediction">
        <sequence resource="EMBL-CDS" id="CAB79515"/>
    </conflict>
</comment>
<name>NOP2B_ARATH</name>
<keyword id="KW-0489">Methyltransferase</keyword>
<keyword id="KW-0539">Nucleus</keyword>
<keyword id="KW-1185">Reference proteome</keyword>
<keyword id="KW-0690">Ribosome biogenesis</keyword>
<keyword id="KW-0694">RNA-binding</keyword>
<keyword id="KW-0698">rRNA processing</keyword>
<keyword id="KW-0949">S-adenosyl-L-methionine</keyword>
<keyword id="KW-0808">Transferase</keyword>
<gene>
    <name evidence="8" type="primary">NOP2B</name>
    <name evidence="9" type="synonym">TRM4d</name>
    <name evidence="11" type="ordered locus">At4g26600</name>
    <name evidence="12" type="ORF">T15N24.50</name>
</gene>
<proteinExistence type="evidence at protein level"/>
<reference key="1">
    <citation type="journal article" date="1999" name="Nature">
        <title>Sequence and analysis of chromosome 4 of the plant Arabidopsis thaliana.</title>
        <authorList>
            <person name="Mayer K.F.X."/>
            <person name="Schueller C."/>
            <person name="Wambutt R."/>
            <person name="Murphy G."/>
            <person name="Volckaert G."/>
            <person name="Pohl T."/>
            <person name="Duesterhoeft A."/>
            <person name="Stiekema W."/>
            <person name="Entian K.-D."/>
            <person name="Terryn N."/>
            <person name="Harris B."/>
            <person name="Ansorge W."/>
            <person name="Brandt P."/>
            <person name="Grivell L.A."/>
            <person name="Rieger M."/>
            <person name="Weichselgartner M."/>
            <person name="de Simone V."/>
            <person name="Obermaier B."/>
            <person name="Mache R."/>
            <person name="Mueller M."/>
            <person name="Kreis M."/>
            <person name="Delseny M."/>
            <person name="Puigdomenech P."/>
            <person name="Watson M."/>
            <person name="Schmidtheini T."/>
            <person name="Reichert B."/>
            <person name="Portetelle D."/>
            <person name="Perez-Alonso M."/>
            <person name="Boutry M."/>
            <person name="Bancroft I."/>
            <person name="Vos P."/>
            <person name="Hoheisel J."/>
            <person name="Zimmermann W."/>
            <person name="Wedler H."/>
            <person name="Ridley P."/>
            <person name="Langham S.-A."/>
            <person name="McCullagh B."/>
            <person name="Bilham L."/>
            <person name="Robben J."/>
            <person name="van der Schueren J."/>
            <person name="Grymonprez B."/>
            <person name="Chuang Y.-J."/>
            <person name="Vandenbussche F."/>
            <person name="Braeken M."/>
            <person name="Weltjens I."/>
            <person name="Voet M."/>
            <person name="Bastiaens I."/>
            <person name="Aert R."/>
            <person name="Defoor E."/>
            <person name="Weitzenegger T."/>
            <person name="Bothe G."/>
            <person name="Ramsperger U."/>
            <person name="Hilbert H."/>
            <person name="Braun M."/>
            <person name="Holzer E."/>
            <person name="Brandt A."/>
            <person name="Peters S."/>
            <person name="van Staveren M."/>
            <person name="Dirkse W."/>
            <person name="Mooijman P."/>
            <person name="Klein Lankhorst R."/>
            <person name="Rose M."/>
            <person name="Hauf J."/>
            <person name="Koetter P."/>
            <person name="Berneiser S."/>
            <person name="Hempel S."/>
            <person name="Feldpausch M."/>
            <person name="Lamberth S."/>
            <person name="Van den Daele H."/>
            <person name="De Keyser A."/>
            <person name="Buysshaert C."/>
            <person name="Gielen J."/>
            <person name="Villarroel R."/>
            <person name="De Clercq R."/>
            <person name="van Montagu M."/>
            <person name="Rogers J."/>
            <person name="Cronin A."/>
            <person name="Quail M.A."/>
            <person name="Bray-Allen S."/>
            <person name="Clark L."/>
            <person name="Doggett J."/>
            <person name="Hall S."/>
            <person name="Kay M."/>
            <person name="Lennard N."/>
            <person name="McLay K."/>
            <person name="Mayes R."/>
            <person name="Pettett A."/>
            <person name="Rajandream M.A."/>
            <person name="Lyne M."/>
            <person name="Benes V."/>
            <person name="Rechmann S."/>
            <person name="Borkova D."/>
            <person name="Bloecker H."/>
            <person name="Scharfe M."/>
            <person name="Grimm M."/>
            <person name="Loehnert T.-H."/>
            <person name="Dose S."/>
            <person name="de Haan M."/>
            <person name="Maarse A.C."/>
            <person name="Schaefer M."/>
            <person name="Mueller-Auer S."/>
            <person name="Gabel C."/>
            <person name="Fuchs M."/>
            <person name="Fartmann B."/>
            <person name="Granderath K."/>
            <person name="Dauner D."/>
            <person name="Herzl A."/>
            <person name="Neumann S."/>
            <person name="Argiriou A."/>
            <person name="Vitale D."/>
            <person name="Liguori R."/>
            <person name="Piravandi E."/>
            <person name="Massenet O."/>
            <person name="Quigley F."/>
            <person name="Clabauld G."/>
            <person name="Muendlein A."/>
            <person name="Felber R."/>
            <person name="Schnabl S."/>
            <person name="Hiller R."/>
            <person name="Schmidt W."/>
            <person name="Lecharny A."/>
            <person name="Aubourg S."/>
            <person name="Chefdor F."/>
            <person name="Cooke R."/>
            <person name="Berger C."/>
            <person name="Monfort A."/>
            <person name="Casacuberta E."/>
            <person name="Gibbons T."/>
            <person name="Weber N."/>
            <person name="Vandenbol M."/>
            <person name="Bargues M."/>
            <person name="Terol J."/>
            <person name="Torres A."/>
            <person name="Perez-Perez A."/>
            <person name="Purnelle B."/>
            <person name="Bent E."/>
            <person name="Johnson S."/>
            <person name="Tacon D."/>
            <person name="Jesse T."/>
            <person name="Heijnen L."/>
            <person name="Schwarz S."/>
            <person name="Scholler P."/>
            <person name="Heber S."/>
            <person name="Francs P."/>
            <person name="Bielke C."/>
            <person name="Frishman D."/>
            <person name="Haase D."/>
            <person name="Lemcke K."/>
            <person name="Mewes H.-W."/>
            <person name="Stocker S."/>
            <person name="Zaccaria P."/>
            <person name="Bevan M."/>
            <person name="Wilson R.K."/>
            <person name="de la Bastide M."/>
            <person name="Habermann K."/>
            <person name="Parnell L."/>
            <person name="Dedhia N."/>
            <person name="Gnoj L."/>
            <person name="Schutz K."/>
            <person name="Huang E."/>
            <person name="Spiegel L."/>
            <person name="Sekhon M."/>
            <person name="Murray J."/>
            <person name="Sheet P."/>
            <person name="Cordes M."/>
            <person name="Abu-Threideh J."/>
            <person name="Stoneking T."/>
            <person name="Kalicki J."/>
            <person name="Graves T."/>
            <person name="Harmon G."/>
            <person name="Edwards J."/>
            <person name="Latreille P."/>
            <person name="Courtney L."/>
            <person name="Cloud J."/>
            <person name="Abbott A."/>
            <person name="Scott K."/>
            <person name="Johnson D."/>
            <person name="Minx P."/>
            <person name="Bentley D."/>
            <person name="Fulton B."/>
            <person name="Miller N."/>
            <person name="Greco T."/>
            <person name="Kemp K."/>
            <person name="Kramer J."/>
            <person name="Fulton L."/>
            <person name="Mardis E."/>
            <person name="Dante M."/>
            <person name="Pepin K."/>
            <person name="Hillier L.W."/>
            <person name="Nelson J."/>
            <person name="Spieth J."/>
            <person name="Ryan E."/>
            <person name="Andrews S."/>
            <person name="Geisel C."/>
            <person name="Layman D."/>
            <person name="Du H."/>
            <person name="Ali J."/>
            <person name="Berghoff A."/>
            <person name="Jones K."/>
            <person name="Drone K."/>
            <person name="Cotton M."/>
            <person name="Joshu C."/>
            <person name="Antonoiu B."/>
            <person name="Zidanic M."/>
            <person name="Strong C."/>
            <person name="Sun H."/>
            <person name="Lamar B."/>
            <person name="Yordan C."/>
            <person name="Ma P."/>
            <person name="Zhong J."/>
            <person name="Preston R."/>
            <person name="Vil D."/>
            <person name="Shekher M."/>
            <person name="Matero A."/>
            <person name="Shah R."/>
            <person name="Swaby I.K."/>
            <person name="O'Shaughnessy A."/>
            <person name="Rodriguez M."/>
            <person name="Hoffman J."/>
            <person name="Till S."/>
            <person name="Granat S."/>
            <person name="Shohdy N."/>
            <person name="Hasegawa A."/>
            <person name="Hameed A."/>
            <person name="Lodhi M."/>
            <person name="Johnson A."/>
            <person name="Chen E."/>
            <person name="Marra M.A."/>
            <person name="Martienssen R."/>
            <person name="McCombie W.R."/>
        </authorList>
    </citation>
    <scope>NUCLEOTIDE SEQUENCE [LARGE SCALE GENOMIC DNA]</scope>
    <source>
        <strain>cv. Columbia</strain>
    </source>
</reference>
<reference key="2">
    <citation type="journal article" date="2017" name="Plant J.">
        <title>Araport11: a complete reannotation of the Arabidopsis thaliana reference genome.</title>
        <authorList>
            <person name="Cheng C.Y."/>
            <person name="Krishnakumar V."/>
            <person name="Chan A.P."/>
            <person name="Thibaud-Nissen F."/>
            <person name="Schobel S."/>
            <person name="Town C.D."/>
        </authorList>
    </citation>
    <scope>GENOME REANNOTATION</scope>
    <source>
        <strain>cv. Columbia</strain>
    </source>
</reference>
<reference key="3">
    <citation type="journal article" date="2003" name="Science">
        <title>Empirical analysis of transcriptional activity in the Arabidopsis genome.</title>
        <authorList>
            <person name="Yamada K."/>
            <person name="Lim J."/>
            <person name="Dale J.M."/>
            <person name="Chen H."/>
            <person name="Shinn P."/>
            <person name="Palm C.J."/>
            <person name="Southwick A.M."/>
            <person name="Wu H.C."/>
            <person name="Kim C.J."/>
            <person name="Nguyen M."/>
            <person name="Pham P.K."/>
            <person name="Cheuk R.F."/>
            <person name="Karlin-Newmann G."/>
            <person name="Liu S.X."/>
            <person name="Lam B."/>
            <person name="Sakano H."/>
            <person name="Wu T."/>
            <person name="Yu G."/>
            <person name="Miranda M."/>
            <person name="Quach H.L."/>
            <person name="Tripp M."/>
            <person name="Chang C.H."/>
            <person name="Lee J.M."/>
            <person name="Toriumi M.J."/>
            <person name="Chan M.M."/>
            <person name="Tang C.C."/>
            <person name="Onodera C.S."/>
            <person name="Deng J.M."/>
            <person name="Akiyama K."/>
            <person name="Ansari Y."/>
            <person name="Arakawa T."/>
            <person name="Banh J."/>
            <person name="Banno F."/>
            <person name="Bowser L."/>
            <person name="Brooks S.Y."/>
            <person name="Carninci P."/>
            <person name="Chao Q."/>
            <person name="Choy N."/>
            <person name="Enju A."/>
            <person name="Goldsmith A.D."/>
            <person name="Gurjal M."/>
            <person name="Hansen N.F."/>
            <person name="Hayashizaki Y."/>
            <person name="Johnson-Hopson C."/>
            <person name="Hsuan V.W."/>
            <person name="Iida K."/>
            <person name="Karnes M."/>
            <person name="Khan S."/>
            <person name="Koesema E."/>
            <person name="Ishida J."/>
            <person name="Jiang P.X."/>
            <person name="Jones T."/>
            <person name="Kawai J."/>
            <person name="Kamiya A."/>
            <person name="Meyers C."/>
            <person name="Nakajima M."/>
            <person name="Narusaka M."/>
            <person name="Seki M."/>
            <person name="Sakurai T."/>
            <person name="Satou M."/>
            <person name="Tamse R."/>
            <person name="Vaysberg M."/>
            <person name="Wallender E.K."/>
            <person name="Wong C."/>
            <person name="Yamamura Y."/>
            <person name="Yuan S."/>
            <person name="Shinozaki K."/>
            <person name="Davis R.W."/>
            <person name="Theologis A."/>
            <person name="Ecker J.R."/>
        </authorList>
    </citation>
    <scope>NUCLEOTIDE SEQUENCE [LARGE SCALE MRNA]</scope>
    <source>
        <strain>cv. Columbia</strain>
    </source>
</reference>
<reference key="4">
    <citation type="journal article" date="2015" name="BMC Plant Biol.">
        <title>Conservation of tRNA and rRNA 5-methylcytosine in the kingdom Plantae.</title>
        <authorList>
            <person name="Burgess A.L."/>
            <person name="David R."/>
            <person name="Searle I.R."/>
        </authorList>
    </citation>
    <scope>FUNCTION</scope>
    <scope>DISRUPTION PHENOTYPE</scope>
    <scope>CATALYTIC ACTIVITY</scope>
    <source>
        <strain>cv. Columbia</strain>
    </source>
</reference>
<reference key="5">
    <citation type="journal article" date="2017" name="BMC Plant Biol.">
        <title>Identification of tRNA nucleoside modification genes critical for stress response and development in rice and Arabidopsis.</title>
        <authorList>
            <person name="Wang Y."/>
            <person name="Pang C."/>
            <person name="Li X."/>
            <person name="Hu Z."/>
            <person name="Lv Z."/>
            <person name="Zheng B."/>
            <person name="Chen P."/>
        </authorList>
    </citation>
    <scope>GENE FAMILY</scope>
    <scope>NOMENCLATURE</scope>
</reference>
<organism>
    <name type="scientific">Arabidopsis thaliana</name>
    <name type="common">Mouse-ear cress</name>
    <dbReference type="NCBI Taxonomy" id="3702"/>
    <lineage>
        <taxon>Eukaryota</taxon>
        <taxon>Viridiplantae</taxon>
        <taxon>Streptophyta</taxon>
        <taxon>Embryophyta</taxon>
        <taxon>Tracheophyta</taxon>
        <taxon>Spermatophyta</taxon>
        <taxon>Magnoliopsida</taxon>
        <taxon>eudicotyledons</taxon>
        <taxon>Gunneridae</taxon>
        <taxon>Pentapetalae</taxon>
        <taxon>rosids</taxon>
        <taxon>malvids</taxon>
        <taxon>Brassicales</taxon>
        <taxon>Brassicaceae</taxon>
        <taxon>Camelineae</taxon>
        <taxon>Arabidopsis</taxon>
    </lineage>
</organism>
<protein>
    <recommendedName>
        <fullName evidence="10">26S rRNA (cytosine-C(5))-methyltransferase NOP2B</fullName>
        <ecNumber evidence="5 7">2.1.1.-</ecNumber>
    </recommendedName>
    <alternativeName>
        <fullName evidence="8">Nucleolar protein 2B</fullName>
    </alternativeName>
    <alternativeName>
        <fullName evidence="9">tRNA methyltransferase 4d</fullName>
        <shortName evidence="9">AtTRM4d</shortName>
    </alternativeName>
</protein>
<sequence length="671" mass="75543">MAALTRNKKKGSNSQTPPLNKQTKASPLKKAAKTQKPPLKKQRKCISEKKPLKKPEVSTDEEEEEEENEQSDEGSESGSDLFSDGDEEGNNDSDDDDDDDDDDDDDDEDAEPLAEDFLDGSDNEEVTMGSDLDSDSGGSKLERKSRAIDRKRKKEVQDADDEFKMNIKEKPDEFQLPTQKELEEEARRPPDLPSLQMRIREIVRILSNFKDLKPKGDKHERNDYVGQLKADLSSYYGYNEFLIGTLIEMFPVVELMELIEAFEKKRPTSIRTNTLKTRRRDLADILLNRGVNLDPLSKWSKVGLIVYDSQVPIGATPEYLAGFYMLQSASSFLPVMALAPREKERVVDMAAAPGGKTTYVAALMKNTGIIYANEMKVPRLKSLSANLHRMGVTNTIVCNYDGRELTKVLGQSSVDRVLLDAPCSGTGVISKDESVKTSKSADDIKKFAHLQKQLILGAIDLVDANSKTGGYIVYSTCSVMIPENEAVIDYALKNRDVKLVPCGLDFGRPGFSSFREHRFHPSLEKTRRFYPHVHNMDGFFVAKLKKMSNAMQPSGNDEPAVTMEQAQVSSSDDDDEKAEAIEELEKPPVASGQPKRESNTKEDTNKRKNPRSKEIHKGKRNKNTKTESGNVEEPRKQKKKRSQWKNEIAQAREEKRKTMRENAKETPKHRG</sequence>
<evidence type="ECO:0000250" key="1">
    <source>
        <dbReference type="UniProtKB" id="P40991"/>
    </source>
</evidence>
<evidence type="ECO:0000250" key="2">
    <source>
        <dbReference type="UniProtKB" id="P46087"/>
    </source>
</evidence>
<evidence type="ECO:0000250" key="3">
    <source>
        <dbReference type="UniProtKB" id="Q9FG73"/>
    </source>
</evidence>
<evidence type="ECO:0000255" key="4">
    <source>
        <dbReference type="PROSITE-ProRule" id="PRU00768"/>
    </source>
</evidence>
<evidence type="ECO:0000255" key="5">
    <source>
        <dbReference type="PROSITE-ProRule" id="PRU01023"/>
    </source>
</evidence>
<evidence type="ECO:0000256" key="6">
    <source>
        <dbReference type="SAM" id="MobiDB-lite"/>
    </source>
</evidence>
<evidence type="ECO:0000269" key="7">
    <source>
    </source>
</evidence>
<evidence type="ECO:0000303" key="8">
    <source>
    </source>
</evidence>
<evidence type="ECO:0000303" key="9">
    <source>
    </source>
</evidence>
<evidence type="ECO:0000305" key="10"/>
<evidence type="ECO:0000312" key="11">
    <source>
        <dbReference type="Araport" id="AT4G26600"/>
    </source>
</evidence>
<evidence type="ECO:0000312" key="12">
    <source>
        <dbReference type="EMBL" id="CAB77061.1"/>
    </source>
</evidence>